<gene>
    <name evidence="1" type="primary">mutS</name>
    <name type="ordered locus">lwe1419</name>
</gene>
<accession>A0AIK5</accession>
<feature type="chain" id="PRO_1000008074" description="DNA mismatch repair protein MutS">
    <location>
        <begin position="1"/>
        <end position="860"/>
    </location>
</feature>
<feature type="binding site" evidence="1">
    <location>
        <begin position="607"/>
        <end position="614"/>
    </location>
    <ligand>
        <name>ATP</name>
        <dbReference type="ChEBI" id="CHEBI:30616"/>
    </ligand>
</feature>
<dbReference type="EMBL" id="AM263198">
    <property type="protein sequence ID" value="CAK20837.1"/>
    <property type="molecule type" value="Genomic_DNA"/>
</dbReference>
<dbReference type="RefSeq" id="WP_011702215.1">
    <property type="nucleotide sequence ID" value="NC_008555.1"/>
</dbReference>
<dbReference type="SMR" id="A0AIK5"/>
<dbReference type="STRING" id="386043.lwe1419"/>
<dbReference type="GeneID" id="61189295"/>
<dbReference type="KEGG" id="lwe:lwe1419"/>
<dbReference type="eggNOG" id="COG0249">
    <property type="taxonomic scope" value="Bacteria"/>
</dbReference>
<dbReference type="HOGENOM" id="CLU_002472_3_1_9"/>
<dbReference type="OrthoDB" id="9802448at2"/>
<dbReference type="Proteomes" id="UP000000779">
    <property type="component" value="Chromosome"/>
</dbReference>
<dbReference type="GO" id="GO:0005829">
    <property type="term" value="C:cytosol"/>
    <property type="evidence" value="ECO:0007669"/>
    <property type="project" value="TreeGrafter"/>
</dbReference>
<dbReference type="GO" id="GO:0005524">
    <property type="term" value="F:ATP binding"/>
    <property type="evidence" value="ECO:0007669"/>
    <property type="project" value="UniProtKB-UniRule"/>
</dbReference>
<dbReference type="GO" id="GO:0140664">
    <property type="term" value="F:ATP-dependent DNA damage sensor activity"/>
    <property type="evidence" value="ECO:0007669"/>
    <property type="project" value="InterPro"/>
</dbReference>
<dbReference type="GO" id="GO:0003684">
    <property type="term" value="F:damaged DNA binding"/>
    <property type="evidence" value="ECO:0007669"/>
    <property type="project" value="UniProtKB-UniRule"/>
</dbReference>
<dbReference type="GO" id="GO:0030983">
    <property type="term" value="F:mismatched DNA binding"/>
    <property type="evidence" value="ECO:0007669"/>
    <property type="project" value="InterPro"/>
</dbReference>
<dbReference type="GO" id="GO:0006298">
    <property type="term" value="P:mismatch repair"/>
    <property type="evidence" value="ECO:0007669"/>
    <property type="project" value="UniProtKB-UniRule"/>
</dbReference>
<dbReference type="CDD" id="cd03284">
    <property type="entry name" value="ABC_MutS1"/>
    <property type="match status" value="1"/>
</dbReference>
<dbReference type="FunFam" id="1.10.1420.10:FF:000007">
    <property type="entry name" value="DNA mismatch repair protein MutS"/>
    <property type="match status" value="1"/>
</dbReference>
<dbReference type="FunFam" id="3.40.1170.10:FF:000001">
    <property type="entry name" value="DNA mismatch repair protein MutS"/>
    <property type="match status" value="1"/>
</dbReference>
<dbReference type="FunFam" id="3.40.50.300:FF:000896">
    <property type="entry name" value="DNA mismatch repair protein MutS"/>
    <property type="match status" value="1"/>
</dbReference>
<dbReference type="Gene3D" id="1.10.1420.10">
    <property type="match status" value="2"/>
</dbReference>
<dbReference type="Gene3D" id="3.40.1170.10">
    <property type="entry name" value="DNA repair protein MutS, domain I"/>
    <property type="match status" value="1"/>
</dbReference>
<dbReference type="Gene3D" id="3.30.420.110">
    <property type="entry name" value="MutS, connector domain"/>
    <property type="match status" value="1"/>
</dbReference>
<dbReference type="Gene3D" id="3.40.50.300">
    <property type="entry name" value="P-loop containing nucleotide triphosphate hydrolases"/>
    <property type="match status" value="1"/>
</dbReference>
<dbReference type="HAMAP" id="MF_00096">
    <property type="entry name" value="MutS"/>
    <property type="match status" value="1"/>
</dbReference>
<dbReference type="InterPro" id="IPR005748">
    <property type="entry name" value="DNA_mismatch_repair_MutS"/>
</dbReference>
<dbReference type="InterPro" id="IPR007695">
    <property type="entry name" value="DNA_mismatch_repair_MutS-lik_N"/>
</dbReference>
<dbReference type="InterPro" id="IPR017261">
    <property type="entry name" value="DNA_mismatch_repair_MutS/MSH"/>
</dbReference>
<dbReference type="InterPro" id="IPR000432">
    <property type="entry name" value="DNA_mismatch_repair_MutS_C"/>
</dbReference>
<dbReference type="InterPro" id="IPR007861">
    <property type="entry name" value="DNA_mismatch_repair_MutS_clamp"/>
</dbReference>
<dbReference type="InterPro" id="IPR007696">
    <property type="entry name" value="DNA_mismatch_repair_MutS_core"/>
</dbReference>
<dbReference type="InterPro" id="IPR016151">
    <property type="entry name" value="DNA_mismatch_repair_MutS_N"/>
</dbReference>
<dbReference type="InterPro" id="IPR036187">
    <property type="entry name" value="DNA_mismatch_repair_MutS_sf"/>
</dbReference>
<dbReference type="InterPro" id="IPR007860">
    <property type="entry name" value="DNA_mmatch_repair_MutS_con_dom"/>
</dbReference>
<dbReference type="InterPro" id="IPR045076">
    <property type="entry name" value="MutS"/>
</dbReference>
<dbReference type="InterPro" id="IPR036678">
    <property type="entry name" value="MutS_con_dom_sf"/>
</dbReference>
<dbReference type="InterPro" id="IPR027417">
    <property type="entry name" value="P-loop_NTPase"/>
</dbReference>
<dbReference type="NCBIfam" id="TIGR01070">
    <property type="entry name" value="mutS1"/>
    <property type="match status" value="1"/>
</dbReference>
<dbReference type="NCBIfam" id="NF003810">
    <property type="entry name" value="PRK05399.1"/>
    <property type="match status" value="1"/>
</dbReference>
<dbReference type="PANTHER" id="PTHR11361:SF34">
    <property type="entry name" value="DNA MISMATCH REPAIR PROTEIN MSH1, MITOCHONDRIAL"/>
    <property type="match status" value="1"/>
</dbReference>
<dbReference type="PANTHER" id="PTHR11361">
    <property type="entry name" value="DNA MISMATCH REPAIR PROTEIN MUTS FAMILY MEMBER"/>
    <property type="match status" value="1"/>
</dbReference>
<dbReference type="Pfam" id="PF01624">
    <property type="entry name" value="MutS_I"/>
    <property type="match status" value="1"/>
</dbReference>
<dbReference type="Pfam" id="PF05188">
    <property type="entry name" value="MutS_II"/>
    <property type="match status" value="1"/>
</dbReference>
<dbReference type="Pfam" id="PF05192">
    <property type="entry name" value="MutS_III"/>
    <property type="match status" value="1"/>
</dbReference>
<dbReference type="Pfam" id="PF05190">
    <property type="entry name" value="MutS_IV"/>
    <property type="match status" value="1"/>
</dbReference>
<dbReference type="Pfam" id="PF00488">
    <property type="entry name" value="MutS_V"/>
    <property type="match status" value="1"/>
</dbReference>
<dbReference type="PIRSF" id="PIRSF037677">
    <property type="entry name" value="DNA_mis_repair_Msh6"/>
    <property type="match status" value="1"/>
</dbReference>
<dbReference type="SMART" id="SM00534">
    <property type="entry name" value="MUTSac"/>
    <property type="match status" value="1"/>
</dbReference>
<dbReference type="SMART" id="SM00533">
    <property type="entry name" value="MUTSd"/>
    <property type="match status" value="1"/>
</dbReference>
<dbReference type="SUPFAM" id="SSF55271">
    <property type="entry name" value="DNA repair protein MutS, domain I"/>
    <property type="match status" value="1"/>
</dbReference>
<dbReference type="SUPFAM" id="SSF53150">
    <property type="entry name" value="DNA repair protein MutS, domain II"/>
    <property type="match status" value="1"/>
</dbReference>
<dbReference type="SUPFAM" id="SSF48334">
    <property type="entry name" value="DNA repair protein MutS, domain III"/>
    <property type="match status" value="1"/>
</dbReference>
<dbReference type="SUPFAM" id="SSF52540">
    <property type="entry name" value="P-loop containing nucleoside triphosphate hydrolases"/>
    <property type="match status" value="1"/>
</dbReference>
<dbReference type="PROSITE" id="PS00486">
    <property type="entry name" value="DNA_MISMATCH_REPAIR_2"/>
    <property type="match status" value="1"/>
</dbReference>
<keyword id="KW-0067">ATP-binding</keyword>
<keyword id="KW-0227">DNA damage</keyword>
<keyword id="KW-0234">DNA repair</keyword>
<keyword id="KW-0238">DNA-binding</keyword>
<keyword id="KW-0547">Nucleotide-binding</keyword>
<comment type="function">
    <text evidence="1">This protein is involved in the repair of mismatches in DNA. It is possible that it carries out the mismatch recognition step. This protein has a weak ATPase activity.</text>
</comment>
<comment type="similarity">
    <text evidence="1">Belongs to the DNA mismatch repair MutS family.</text>
</comment>
<evidence type="ECO:0000255" key="1">
    <source>
        <dbReference type="HAMAP-Rule" id="MF_00096"/>
    </source>
</evidence>
<name>MUTS_LISW6</name>
<protein>
    <recommendedName>
        <fullName evidence="1">DNA mismatch repair protein MutS</fullName>
    </recommendedName>
</protein>
<organism>
    <name type="scientific">Listeria welshimeri serovar 6b (strain ATCC 35897 / DSM 20650 / CCUG 15529 / CIP 8149 / NCTC 11857 / SLCC 5334 / V8)</name>
    <dbReference type="NCBI Taxonomy" id="386043"/>
    <lineage>
        <taxon>Bacteria</taxon>
        <taxon>Bacillati</taxon>
        <taxon>Bacillota</taxon>
        <taxon>Bacilli</taxon>
        <taxon>Bacillales</taxon>
        <taxon>Listeriaceae</taxon>
        <taxon>Listeria</taxon>
    </lineage>
</organism>
<proteinExistence type="inferred from homology"/>
<reference key="1">
    <citation type="journal article" date="2006" name="J. Bacteriol.">
        <title>Whole-genome sequence of Listeria welshimeri reveals common steps in genome reduction with Listeria innocua as compared to Listeria monocytogenes.</title>
        <authorList>
            <person name="Hain T."/>
            <person name="Steinweg C."/>
            <person name="Kuenne C.T."/>
            <person name="Billion A."/>
            <person name="Ghai R."/>
            <person name="Chatterjee S.S."/>
            <person name="Domann E."/>
            <person name="Kaerst U."/>
            <person name="Goesmann A."/>
            <person name="Bekel T."/>
            <person name="Bartels D."/>
            <person name="Kaiser O."/>
            <person name="Meyer F."/>
            <person name="Puehler A."/>
            <person name="Weisshaar B."/>
            <person name="Wehland J."/>
            <person name="Liang C."/>
            <person name="Dandekar T."/>
            <person name="Lampidis R."/>
            <person name="Kreft J."/>
            <person name="Goebel W."/>
            <person name="Chakraborty T."/>
        </authorList>
    </citation>
    <scope>NUCLEOTIDE SEQUENCE [LARGE SCALE GENOMIC DNA]</scope>
    <source>
        <strain>ATCC 35897 / DSM 20650 / CCUG 15529 / CIP 8149 / NCTC 11857 / SLCC 5334 / V8</strain>
    </source>
</reference>
<sequence length="860" mass="98356">MTEYTPMIKQYLEIKDKYQDAFLFFRLGDFYEMFFEDALNASQILEITLTGREGGTKEKIPMCGVPYHSASGYIDTLIEKGYKVAICEQVEDPKTTKGMVKREVVQLISPGTVMDERGLKAKENNYIASLYCYEGKEYGFAYSDLSTGELKSTVIEASEDRLINELTTLSTRELIVSESEKTVLSDVMKEQLGLTFSVHEEDTIPSENEKLVTRHMSLSEKRAIGKLLHYLKETQKRDLGHLQQAVHYETSNYMKMDYYSKRNLELAESIRGKGRQGTLLWLLDNTQTAMGGRMLKQWIDRPLIDRKKIIERQNDVSELMANFFERLELVENLKNVYDLERLAGRVAYGNVNARDLIQLRNSLYQIPRIRATLLSMNSKSLTELANQLDPCEQLTEKLEEAIMDSAPISIREGGIIKDGYNSQLDTYRDASRNGKTWIAELERKERELTGIKTMKVGFNRVFGYYIEVTRANTHLLPEGRYERKQTLTNAERYITPELKEKEKLILDAEEKSMELEYLLFTEVREMVKDYIERLQKLAKSVSEIDCLQSFADISEKNHFIRPTLSEDGSLHVKQGRHPVVEKVMGAQSYVANDCDLDENREILLITGPNMSGKSTYMRQVALTAICAQVGCFVPAEEATLPIFDQIFTRIGAADDLIAGQSTFMVEMLEARNAIVHATKDSLILFDEIGRGTATYDGMALAQAIIEYIHENVHAKTLFSTHYHELTDLEKELRGLQNIHVSAVEENGKVVFLHKIKEGPADKSYGIHVAELAELPKSLIERASRILEQLENENKKIIITNEKQPEEIHEEVQLSMFPVEPEKKTSSKETKLIKEIASMNIMQMTPMDAMNKLYELQSKIH</sequence>